<gene>
    <name evidence="1" type="primary">tsaD</name>
    <name type="synonym">gcp</name>
    <name type="ordered locus">EcE24377A_3528</name>
</gene>
<reference key="1">
    <citation type="journal article" date="2008" name="J. Bacteriol.">
        <title>The pangenome structure of Escherichia coli: comparative genomic analysis of E. coli commensal and pathogenic isolates.</title>
        <authorList>
            <person name="Rasko D.A."/>
            <person name="Rosovitz M.J."/>
            <person name="Myers G.S.A."/>
            <person name="Mongodin E.F."/>
            <person name="Fricke W.F."/>
            <person name="Gajer P."/>
            <person name="Crabtree J."/>
            <person name="Sebaihia M."/>
            <person name="Thomson N.R."/>
            <person name="Chaudhuri R."/>
            <person name="Henderson I.R."/>
            <person name="Sperandio V."/>
            <person name="Ravel J."/>
        </authorList>
    </citation>
    <scope>NUCLEOTIDE SEQUENCE [LARGE SCALE GENOMIC DNA]</scope>
    <source>
        <strain>E24377A / ETEC</strain>
    </source>
</reference>
<protein>
    <recommendedName>
        <fullName evidence="1">tRNA N6-adenosine threonylcarbamoyltransferase</fullName>
        <ecNumber evidence="1">2.3.1.234</ecNumber>
    </recommendedName>
    <alternativeName>
        <fullName evidence="1">N6-L-threonylcarbamoyladenine synthase</fullName>
        <shortName evidence="1">t(6)A synthase</shortName>
    </alternativeName>
    <alternativeName>
        <fullName evidence="1">t(6)A37 threonylcarbamoyladenosine biosynthesis protein TsaD</fullName>
    </alternativeName>
    <alternativeName>
        <fullName evidence="1">tRNA threonylcarbamoyladenosine biosynthesis protein TsaD</fullName>
    </alternativeName>
</protein>
<comment type="function">
    <text evidence="1">Required for the formation of a threonylcarbamoyl group on adenosine at position 37 (t(6)A37) in tRNAs that read codons beginning with adenine. Is involved in the transfer of the threonylcarbamoyl moiety of threonylcarbamoyl-AMP (TC-AMP) to the N6 group of A37, together with TsaE and TsaB. TsaD likely plays a direct catalytic role in this reaction.</text>
</comment>
<comment type="catalytic activity">
    <reaction evidence="1">
        <text>L-threonylcarbamoyladenylate + adenosine(37) in tRNA = N(6)-L-threonylcarbamoyladenosine(37) in tRNA + AMP + H(+)</text>
        <dbReference type="Rhea" id="RHEA:37059"/>
        <dbReference type="Rhea" id="RHEA-COMP:10162"/>
        <dbReference type="Rhea" id="RHEA-COMP:10163"/>
        <dbReference type="ChEBI" id="CHEBI:15378"/>
        <dbReference type="ChEBI" id="CHEBI:73682"/>
        <dbReference type="ChEBI" id="CHEBI:74411"/>
        <dbReference type="ChEBI" id="CHEBI:74418"/>
        <dbReference type="ChEBI" id="CHEBI:456215"/>
        <dbReference type="EC" id="2.3.1.234"/>
    </reaction>
</comment>
<comment type="cofactor">
    <cofactor evidence="1">
        <name>Fe(2+)</name>
        <dbReference type="ChEBI" id="CHEBI:29033"/>
    </cofactor>
    <text evidence="1">Binds 1 Fe(2+) ion per subunit.</text>
</comment>
<comment type="subcellular location">
    <subcellularLocation>
        <location evidence="1">Cytoplasm</location>
    </subcellularLocation>
</comment>
<comment type="similarity">
    <text evidence="1">Belongs to the KAE1 / TsaD family.</text>
</comment>
<evidence type="ECO:0000255" key="1">
    <source>
        <dbReference type="HAMAP-Rule" id="MF_01445"/>
    </source>
</evidence>
<keyword id="KW-0012">Acyltransferase</keyword>
<keyword id="KW-0963">Cytoplasm</keyword>
<keyword id="KW-0408">Iron</keyword>
<keyword id="KW-0479">Metal-binding</keyword>
<keyword id="KW-1185">Reference proteome</keyword>
<keyword id="KW-0808">Transferase</keyword>
<keyword id="KW-0819">tRNA processing</keyword>
<name>TSAD_ECO24</name>
<organism>
    <name type="scientific">Escherichia coli O139:H28 (strain E24377A / ETEC)</name>
    <dbReference type="NCBI Taxonomy" id="331111"/>
    <lineage>
        <taxon>Bacteria</taxon>
        <taxon>Pseudomonadati</taxon>
        <taxon>Pseudomonadota</taxon>
        <taxon>Gammaproteobacteria</taxon>
        <taxon>Enterobacterales</taxon>
        <taxon>Enterobacteriaceae</taxon>
        <taxon>Escherichia</taxon>
    </lineage>
</organism>
<proteinExistence type="inferred from homology"/>
<sequence length="337" mass="36007">MRVLGIETSCDETGIAIYDDEKGLLANQLYSQVKLHADYGGVVPELASRDHVRKTVPLIQAALKESGLTAKDIDAVAYTAGPGLVGALLVGATVGRSLAFAWNVPAIPVHHMEGHLLAPMLEDNPPEFPFVALLVSGGHTQLISVTGIGQYELLGESIDDAAGEAFDKTAKLLGLDYPGGPLLSKMAAQGTAGRFVFPRPMTDRPGLDFSFSGLKTFAANTIRDNGTDDQTRADIARAFEDAVVDTLMIKCKRALDQTGFKRLVMAGGVSANRTLRAKLAEMMKKRRGEVFYARPEFCTDNGAMIAYAGMVRFKAGATADLGVSVRPRWPLAELPAA</sequence>
<feature type="chain" id="PRO_1000068570" description="tRNA N6-adenosine threonylcarbamoyltransferase">
    <location>
        <begin position="1"/>
        <end position="337"/>
    </location>
</feature>
<feature type="binding site" evidence="1">
    <location>
        <position position="111"/>
    </location>
    <ligand>
        <name>Fe cation</name>
        <dbReference type="ChEBI" id="CHEBI:24875"/>
    </ligand>
</feature>
<feature type="binding site" evidence="1">
    <location>
        <position position="115"/>
    </location>
    <ligand>
        <name>Fe cation</name>
        <dbReference type="ChEBI" id="CHEBI:24875"/>
    </ligand>
</feature>
<feature type="binding site" evidence="1">
    <location>
        <begin position="134"/>
        <end position="138"/>
    </location>
    <ligand>
        <name>substrate</name>
    </ligand>
</feature>
<feature type="binding site" evidence="1">
    <location>
        <position position="167"/>
    </location>
    <ligand>
        <name>substrate</name>
    </ligand>
</feature>
<feature type="binding site" evidence="1">
    <location>
        <position position="180"/>
    </location>
    <ligand>
        <name>substrate</name>
    </ligand>
</feature>
<feature type="binding site" evidence="1">
    <location>
        <position position="272"/>
    </location>
    <ligand>
        <name>substrate</name>
    </ligand>
</feature>
<feature type="binding site" evidence="1">
    <location>
        <position position="300"/>
    </location>
    <ligand>
        <name>Fe cation</name>
        <dbReference type="ChEBI" id="CHEBI:24875"/>
    </ligand>
</feature>
<accession>A7ZRU6</accession>
<dbReference type="EC" id="2.3.1.234" evidence="1"/>
<dbReference type="EMBL" id="CP000800">
    <property type="protein sequence ID" value="ABV19543.1"/>
    <property type="molecule type" value="Genomic_DNA"/>
</dbReference>
<dbReference type="RefSeq" id="WP_001264365.1">
    <property type="nucleotide sequence ID" value="NC_009801.1"/>
</dbReference>
<dbReference type="SMR" id="A7ZRU6"/>
<dbReference type="GeneID" id="93778929"/>
<dbReference type="KEGG" id="ecw:EcE24377A_3528"/>
<dbReference type="HOGENOM" id="CLU_023208_0_2_6"/>
<dbReference type="Proteomes" id="UP000001122">
    <property type="component" value="Chromosome"/>
</dbReference>
<dbReference type="GO" id="GO:0005737">
    <property type="term" value="C:cytoplasm"/>
    <property type="evidence" value="ECO:0007669"/>
    <property type="project" value="UniProtKB-SubCell"/>
</dbReference>
<dbReference type="GO" id="GO:0005506">
    <property type="term" value="F:iron ion binding"/>
    <property type="evidence" value="ECO:0007669"/>
    <property type="project" value="UniProtKB-UniRule"/>
</dbReference>
<dbReference type="GO" id="GO:0061711">
    <property type="term" value="F:N(6)-L-threonylcarbamoyladenine synthase activity"/>
    <property type="evidence" value="ECO:0007669"/>
    <property type="project" value="UniProtKB-EC"/>
</dbReference>
<dbReference type="GO" id="GO:0002949">
    <property type="term" value="P:tRNA threonylcarbamoyladenosine modification"/>
    <property type="evidence" value="ECO:0007669"/>
    <property type="project" value="UniProtKB-UniRule"/>
</dbReference>
<dbReference type="CDD" id="cd24097">
    <property type="entry name" value="ASKHA_NBD_TsaD-like"/>
    <property type="match status" value="1"/>
</dbReference>
<dbReference type="FunFam" id="3.30.420.40:FF:000031">
    <property type="entry name" value="tRNA N6-adenosine threonylcarbamoyltransferase"/>
    <property type="match status" value="1"/>
</dbReference>
<dbReference type="Gene3D" id="3.30.420.40">
    <property type="match status" value="2"/>
</dbReference>
<dbReference type="HAMAP" id="MF_01445">
    <property type="entry name" value="TsaD"/>
    <property type="match status" value="1"/>
</dbReference>
<dbReference type="InterPro" id="IPR043129">
    <property type="entry name" value="ATPase_NBD"/>
</dbReference>
<dbReference type="InterPro" id="IPR000905">
    <property type="entry name" value="Gcp-like_dom"/>
</dbReference>
<dbReference type="InterPro" id="IPR017861">
    <property type="entry name" value="KAE1/TsaD"/>
</dbReference>
<dbReference type="InterPro" id="IPR017860">
    <property type="entry name" value="Peptidase_M22_CS"/>
</dbReference>
<dbReference type="InterPro" id="IPR022450">
    <property type="entry name" value="TsaD"/>
</dbReference>
<dbReference type="NCBIfam" id="TIGR00329">
    <property type="entry name" value="gcp_kae1"/>
    <property type="match status" value="1"/>
</dbReference>
<dbReference type="NCBIfam" id="TIGR03723">
    <property type="entry name" value="T6A_TsaD_YgjD"/>
    <property type="match status" value="1"/>
</dbReference>
<dbReference type="PANTHER" id="PTHR11735">
    <property type="entry name" value="TRNA N6-ADENOSINE THREONYLCARBAMOYLTRANSFERASE"/>
    <property type="match status" value="1"/>
</dbReference>
<dbReference type="PANTHER" id="PTHR11735:SF6">
    <property type="entry name" value="TRNA N6-ADENOSINE THREONYLCARBAMOYLTRANSFERASE, MITOCHONDRIAL"/>
    <property type="match status" value="1"/>
</dbReference>
<dbReference type="Pfam" id="PF00814">
    <property type="entry name" value="TsaD"/>
    <property type="match status" value="1"/>
</dbReference>
<dbReference type="PRINTS" id="PR00789">
    <property type="entry name" value="OSIALOPTASE"/>
</dbReference>
<dbReference type="SUPFAM" id="SSF53067">
    <property type="entry name" value="Actin-like ATPase domain"/>
    <property type="match status" value="1"/>
</dbReference>
<dbReference type="PROSITE" id="PS01016">
    <property type="entry name" value="GLYCOPROTEASE"/>
    <property type="match status" value="1"/>
</dbReference>